<proteinExistence type="inferred from homology"/>
<dbReference type="EMBL" id="CP000230">
    <property type="protein sequence ID" value="ABC21873.1"/>
    <property type="molecule type" value="Genomic_DNA"/>
</dbReference>
<dbReference type="RefSeq" id="WP_011388827.1">
    <property type="nucleotide sequence ID" value="NC_007643.1"/>
</dbReference>
<dbReference type="RefSeq" id="YP_426160.1">
    <property type="nucleotide sequence ID" value="NC_007643.1"/>
</dbReference>
<dbReference type="SMR" id="Q2RVH2"/>
<dbReference type="STRING" id="269796.Rru_A1072"/>
<dbReference type="EnsemblBacteria" id="ABC21873">
    <property type="protein sequence ID" value="ABC21873"/>
    <property type="gene ID" value="Rru_A1072"/>
</dbReference>
<dbReference type="KEGG" id="rru:Rru_A1072"/>
<dbReference type="PATRIC" id="fig|269796.9.peg.1129"/>
<dbReference type="eggNOG" id="COG0254">
    <property type="taxonomic scope" value="Bacteria"/>
</dbReference>
<dbReference type="HOGENOM" id="CLU_114306_3_2_5"/>
<dbReference type="PhylomeDB" id="Q2RVH2"/>
<dbReference type="Proteomes" id="UP000001929">
    <property type="component" value="Chromosome"/>
</dbReference>
<dbReference type="GO" id="GO:1990904">
    <property type="term" value="C:ribonucleoprotein complex"/>
    <property type="evidence" value="ECO:0007669"/>
    <property type="project" value="UniProtKB-KW"/>
</dbReference>
<dbReference type="GO" id="GO:0005840">
    <property type="term" value="C:ribosome"/>
    <property type="evidence" value="ECO:0007669"/>
    <property type="project" value="UniProtKB-KW"/>
</dbReference>
<dbReference type="GO" id="GO:0019843">
    <property type="term" value="F:rRNA binding"/>
    <property type="evidence" value="ECO:0007669"/>
    <property type="project" value="UniProtKB-KW"/>
</dbReference>
<dbReference type="GO" id="GO:0003735">
    <property type="term" value="F:structural constituent of ribosome"/>
    <property type="evidence" value="ECO:0007669"/>
    <property type="project" value="InterPro"/>
</dbReference>
<dbReference type="GO" id="GO:0006412">
    <property type="term" value="P:translation"/>
    <property type="evidence" value="ECO:0007669"/>
    <property type="project" value="UniProtKB-UniRule"/>
</dbReference>
<dbReference type="Gene3D" id="4.10.830.30">
    <property type="entry name" value="Ribosomal protein L31"/>
    <property type="match status" value="1"/>
</dbReference>
<dbReference type="HAMAP" id="MF_00501">
    <property type="entry name" value="Ribosomal_bL31_1"/>
    <property type="match status" value="1"/>
</dbReference>
<dbReference type="InterPro" id="IPR034704">
    <property type="entry name" value="Ribosomal_bL28/bL31-like_sf"/>
</dbReference>
<dbReference type="InterPro" id="IPR002150">
    <property type="entry name" value="Ribosomal_bL31"/>
</dbReference>
<dbReference type="InterPro" id="IPR027491">
    <property type="entry name" value="Ribosomal_bL31_A"/>
</dbReference>
<dbReference type="InterPro" id="IPR042105">
    <property type="entry name" value="Ribosomal_bL31_sf"/>
</dbReference>
<dbReference type="NCBIfam" id="TIGR00105">
    <property type="entry name" value="L31"/>
    <property type="match status" value="1"/>
</dbReference>
<dbReference type="NCBIfam" id="NF001809">
    <property type="entry name" value="PRK00528.1"/>
    <property type="match status" value="1"/>
</dbReference>
<dbReference type="PANTHER" id="PTHR33280">
    <property type="entry name" value="50S RIBOSOMAL PROTEIN L31, CHLOROPLASTIC"/>
    <property type="match status" value="1"/>
</dbReference>
<dbReference type="PANTHER" id="PTHR33280:SF6">
    <property type="entry name" value="LARGE RIBOSOMAL SUBUNIT PROTEIN BL31A"/>
    <property type="match status" value="1"/>
</dbReference>
<dbReference type="Pfam" id="PF01197">
    <property type="entry name" value="Ribosomal_L31"/>
    <property type="match status" value="1"/>
</dbReference>
<dbReference type="PRINTS" id="PR01249">
    <property type="entry name" value="RIBOSOMALL31"/>
</dbReference>
<dbReference type="SUPFAM" id="SSF143800">
    <property type="entry name" value="L28p-like"/>
    <property type="match status" value="1"/>
</dbReference>
<dbReference type="PROSITE" id="PS01143">
    <property type="entry name" value="RIBOSOMAL_L31"/>
    <property type="match status" value="1"/>
</dbReference>
<sequence length="72" mass="8118">MKKDIHPDYHDITVVMTDGSEFVTRSTYKGESLRLDIDPKSHPAWTGVHRLIDSGGQLAKFNKKFAGFGLKK</sequence>
<name>RL31_RHORT</name>
<accession>Q2RVH2</accession>
<reference key="1">
    <citation type="journal article" date="2011" name="Stand. Genomic Sci.">
        <title>Complete genome sequence of Rhodospirillum rubrum type strain (S1).</title>
        <authorList>
            <person name="Munk A.C."/>
            <person name="Copeland A."/>
            <person name="Lucas S."/>
            <person name="Lapidus A."/>
            <person name="Del Rio T.G."/>
            <person name="Barry K."/>
            <person name="Detter J.C."/>
            <person name="Hammon N."/>
            <person name="Israni S."/>
            <person name="Pitluck S."/>
            <person name="Brettin T."/>
            <person name="Bruce D."/>
            <person name="Han C."/>
            <person name="Tapia R."/>
            <person name="Gilna P."/>
            <person name="Schmutz J."/>
            <person name="Larimer F."/>
            <person name="Land M."/>
            <person name="Kyrpides N.C."/>
            <person name="Mavromatis K."/>
            <person name="Richardson P."/>
            <person name="Rohde M."/>
            <person name="Goeker M."/>
            <person name="Klenk H.P."/>
            <person name="Zhang Y."/>
            <person name="Roberts G.P."/>
            <person name="Reslewic S."/>
            <person name="Schwartz D.C."/>
        </authorList>
    </citation>
    <scope>NUCLEOTIDE SEQUENCE [LARGE SCALE GENOMIC DNA]</scope>
    <source>
        <strain>ATCC 11170 / ATH 1.1.1 / DSM 467 / LMG 4362 / NCIMB 8255 / S1</strain>
    </source>
</reference>
<feature type="chain" id="PRO_0000259220" description="Large ribosomal subunit protein bL31">
    <location>
        <begin position="1"/>
        <end position="72"/>
    </location>
</feature>
<comment type="function">
    <text evidence="1">Binds the 23S rRNA.</text>
</comment>
<comment type="subunit">
    <text evidence="1">Part of the 50S ribosomal subunit.</text>
</comment>
<comment type="similarity">
    <text evidence="1">Belongs to the bacterial ribosomal protein bL31 family. Type A subfamily.</text>
</comment>
<keyword id="KW-1185">Reference proteome</keyword>
<keyword id="KW-0687">Ribonucleoprotein</keyword>
<keyword id="KW-0689">Ribosomal protein</keyword>
<keyword id="KW-0694">RNA-binding</keyword>
<keyword id="KW-0699">rRNA-binding</keyword>
<protein>
    <recommendedName>
        <fullName evidence="1">Large ribosomal subunit protein bL31</fullName>
    </recommendedName>
    <alternativeName>
        <fullName evidence="2">50S ribosomal protein L31</fullName>
    </alternativeName>
</protein>
<evidence type="ECO:0000255" key="1">
    <source>
        <dbReference type="HAMAP-Rule" id="MF_00501"/>
    </source>
</evidence>
<evidence type="ECO:0000305" key="2"/>
<gene>
    <name evidence="1" type="primary">rpmE</name>
    <name type="ordered locus">Rru_A1072</name>
</gene>
<organism>
    <name type="scientific">Rhodospirillum rubrum (strain ATCC 11170 / ATH 1.1.1 / DSM 467 / LMG 4362 / NCIMB 8255 / S1)</name>
    <dbReference type="NCBI Taxonomy" id="269796"/>
    <lineage>
        <taxon>Bacteria</taxon>
        <taxon>Pseudomonadati</taxon>
        <taxon>Pseudomonadota</taxon>
        <taxon>Alphaproteobacteria</taxon>
        <taxon>Rhodospirillales</taxon>
        <taxon>Rhodospirillaceae</taxon>
        <taxon>Rhodospirillum</taxon>
    </lineage>
</organism>